<keyword id="KW-1185">Reference proteome</keyword>
<dbReference type="EMBL" id="AF022214">
    <property type="protein sequence ID" value="AAC18512.1"/>
    <property type="molecule type" value="Genomic_DNA"/>
</dbReference>
<dbReference type="PIR" id="F72808">
    <property type="entry name" value="F72808"/>
</dbReference>
<dbReference type="RefSeq" id="NP_046888.1">
    <property type="nucleotide sequence ID" value="NC_001900.1"/>
</dbReference>
<dbReference type="GeneID" id="1261611"/>
<dbReference type="KEGG" id="vg:1261611"/>
<dbReference type="OrthoDB" id="12907at10239"/>
<dbReference type="Proteomes" id="UP000002131">
    <property type="component" value="Segment"/>
</dbReference>
<dbReference type="InterPro" id="IPR035405">
    <property type="entry name" value="GP70"/>
</dbReference>
<dbReference type="Pfam" id="PF17429">
    <property type="entry name" value="GP70"/>
    <property type="match status" value="1"/>
</dbReference>
<accession>O64263</accession>
<name>VG70_BPMD2</name>
<organismHost>
    <name type="scientific">Mycobacterium</name>
    <dbReference type="NCBI Taxonomy" id="1763"/>
</organismHost>
<reference key="1">
    <citation type="journal article" date="1998" name="J. Mol. Biol.">
        <title>Genome structure of mycobacteriophage D29: implications for phage evolution.</title>
        <authorList>
            <person name="Ford M.E."/>
            <person name="Sarkis G.J."/>
            <person name="Belanger A.E."/>
            <person name="Hendrix R.W."/>
            <person name="Hatfull G.F."/>
        </authorList>
    </citation>
    <scope>NUCLEOTIDE SEQUENCE [LARGE SCALE GENOMIC DNA]</scope>
</reference>
<sequence>MPLTSLVGQFEGVVYTQPEKLVERHGWLEAWKCKAWMEDDPSQVVTLLLAYRSPLCRDTKPMYRPVAEEILKADQVDVLARGFRHDDNMMHGRGEFLVARLRPHSFVESPMCPSLDEIREVVGSTVETALTGNGEMAAP</sequence>
<feature type="chain" id="PRO_0000164812" description="Gene 70 protein">
    <location>
        <begin position="1"/>
        <end position="139"/>
    </location>
</feature>
<proteinExistence type="predicted"/>
<organism>
    <name type="scientific">Mycobacterium phage D29</name>
    <name type="common">Mycobacteriophage D29</name>
    <dbReference type="NCBI Taxonomy" id="28369"/>
    <lineage>
        <taxon>Viruses</taxon>
        <taxon>Duplodnaviria</taxon>
        <taxon>Heunggongvirae</taxon>
        <taxon>Uroviricota</taxon>
        <taxon>Caudoviricetes</taxon>
        <taxon>Fromanvirus</taxon>
    </lineage>
</organism>
<gene>
    <name type="primary">70</name>
</gene>
<protein>
    <recommendedName>
        <fullName>Gene 70 protein</fullName>
    </recommendedName>
    <alternativeName>
        <fullName>Gp70</fullName>
    </alternativeName>
</protein>